<sequence>MTTVKPTSPENPRVFFDITIGGVEAGKVVMELYANTVPKTAENFRALCTGEKGIGKSGKPLSYKGSSFHRVITNFMCQGGDFTMGNGTGGESIYGNKFADENFKLKHFGQGTLSMANAGANTNGSQFFICVAPTDWLDGKHVVFGFVTEGMDVVKKMEAAGSQSGKTTKPVVIANCGQL</sequence>
<feature type="initiator methionine" description="Removed" evidence="3 7">
    <location>
        <position position="1"/>
    </location>
</feature>
<feature type="chain" id="PRO_0000386632" description="Peptidyl-prolyl cis-trans isomerase A">
    <location>
        <begin position="2"/>
        <end position="179"/>
    </location>
</feature>
<feature type="domain" description="PPIase cyclophilin-type" evidence="2">
    <location>
        <begin position="15"/>
        <end position="178"/>
    </location>
</feature>
<keyword id="KW-0963">Cytoplasm</keyword>
<keyword id="KW-0903">Direct protein sequencing</keyword>
<keyword id="KW-0413">Isomerase</keyword>
<keyword id="KW-1185">Reference proteome</keyword>
<keyword id="KW-0697">Rotamase</keyword>
<protein>
    <recommendedName>
        <fullName>Peptidyl-prolyl cis-trans isomerase A</fullName>
        <shortName>PPIase A</shortName>
        <ecNumber evidence="1">5.2.1.8</ecNumber>
    </recommendedName>
    <alternativeName>
        <fullName>Cyclophilin A</fullName>
    </alternativeName>
    <alternativeName>
        <fullName>Rotamase A</fullName>
    </alternativeName>
</protein>
<organism>
    <name type="scientific">Dictyostelium discoideum</name>
    <name type="common">Social amoeba</name>
    <dbReference type="NCBI Taxonomy" id="44689"/>
    <lineage>
        <taxon>Eukaryota</taxon>
        <taxon>Amoebozoa</taxon>
        <taxon>Evosea</taxon>
        <taxon>Eumycetozoa</taxon>
        <taxon>Dictyostelia</taxon>
        <taxon>Dictyosteliales</taxon>
        <taxon>Dictyosteliaceae</taxon>
        <taxon>Dictyostelium</taxon>
    </lineage>
</organism>
<evidence type="ECO:0000250" key="1">
    <source>
        <dbReference type="UniProtKB" id="P62937"/>
    </source>
</evidence>
<evidence type="ECO:0000255" key="2">
    <source>
        <dbReference type="PROSITE-ProRule" id="PRU00156"/>
    </source>
</evidence>
<evidence type="ECO:0000269" key="3">
    <source>
    </source>
</evidence>
<evidence type="ECO:0000269" key="4">
    <source>
    </source>
</evidence>
<evidence type="ECO:0000269" key="5">
    <source>
    </source>
</evidence>
<evidence type="ECO:0000269" key="6">
    <source>
    </source>
</evidence>
<evidence type="ECO:0000269" key="7">
    <source ref="3"/>
</evidence>
<evidence type="ECO:0000305" key="8"/>
<dbReference type="EC" id="5.2.1.8" evidence="1"/>
<dbReference type="EMBL" id="AAFI02000047">
    <property type="protein sequence ID" value="EAL66039.1"/>
    <property type="molecule type" value="Genomic_DNA"/>
</dbReference>
<dbReference type="RefSeq" id="XP_640016.1">
    <property type="nucleotide sequence ID" value="XM_634924.1"/>
</dbReference>
<dbReference type="SMR" id="Q54SM3"/>
<dbReference type="FunCoup" id="Q54SM3">
    <property type="interactions" value="245"/>
</dbReference>
<dbReference type="STRING" id="44689.Q54SM3"/>
<dbReference type="GlyGen" id="Q54SM3">
    <property type="glycosylation" value="1 site"/>
</dbReference>
<dbReference type="PaxDb" id="44689-DDB0216173"/>
<dbReference type="EnsemblProtists" id="EAL66039">
    <property type="protein sequence ID" value="EAL66039"/>
    <property type="gene ID" value="DDB_G0282359"/>
</dbReference>
<dbReference type="GeneID" id="8623540"/>
<dbReference type="KEGG" id="ddi:DDB_G0282359"/>
<dbReference type="dictyBase" id="DDB_G0282359">
    <property type="gene designation" value="ppiA"/>
</dbReference>
<dbReference type="VEuPathDB" id="AmoebaDB:DDB_G0282359"/>
<dbReference type="eggNOG" id="KOG0865">
    <property type="taxonomic scope" value="Eukaryota"/>
</dbReference>
<dbReference type="HOGENOM" id="CLU_012062_4_2_1"/>
<dbReference type="InParanoid" id="Q54SM3"/>
<dbReference type="OMA" id="TWLTGKH"/>
<dbReference type="PhylomeDB" id="Q54SM3"/>
<dbReference type="PRO" id="PR:Q54SM3"/>
<dbReference type="Proteomes" id="UP000002195">
    <property type="component" value="Chromosome 3"/>
</dbReference>
<dbReference type="GO" id="GO:0005737">
    <property type="term" value="C:cytoplasm"/>
    <property type="evidence" value="ECO:0000318"/>
    <property type="project" value="GO_Central"/>
</dbReference>
<dbReference type="GO" id="GO:0005829">
    <property type="term" value="C:cytosol"/>
    <property type="evidence" value="ECO:0000314"/>
    <property type="project" value="dictyBase"/>
</dbReference>
<dbReference type="GO" id="GO:0043231">
    <property type="term" value="C:intracellular membrane-bounded organelle"/>
    <property type="evidence" value="ECO:0000318"/>
    <property type="project" value="GO_Central"/>
</dbReference>
<dbReference type="GO" id="GO:0016018">
    <property type="term" value="F:cyclosporin A binding"/>
    <property type="evidence" value="ECO:0000318"/>
    <property type="project" value="GO_Central"/>
</dbReference>
<dbReference type="GO" id="GO:0003755">
    <property type="term" value="F:peptidyl-prolyl cis-trans isomerase activity"/>
    <property type="evidence" value="ECO:0000250"/>
    <property type="project" value="UniProtKB"/>
</dbReference>
<dbReference type="GO" id="GO:0006457">
    <property type="term" value="P:protein folding"/>
    <property type="evidence" value="ECO:0000250"/>
    <property type="project" value="dictyBase"/>
</dbReference>
<dbReference type="GO" id="GO:0030587">
    <property type="term" value="P:sorocarp development"/>
    <property type="evidence" value="ECO:0000315"/>
    <property type="project" value="dictyBase"/>
</dbReference>
<dbReference type="CDD" id="cd01926">
    <property type="entry name" value="cyclophilin_ABH_like"/>
    <property type="match status" value="1"/>
</dbReference>
<dbReference type="FunFam" id="2.40.100.10:FF:000002">
    <property type="entry name" value="Peptidyl-prolyl cis-trans isomerase"/>
    <property type="match status" value="1"/>
</dbReference>
<dbReference type="Gene3D" id="2.40.100.10">
    <property type="entry name" value="Cyclophilin-like"/>
    <property type="match status" value="1"/>
</dbReference>
<dbReference type="InterPro" id="IPR029000">
    <property type="entry name" value="Cyclophilin-like_dom_sf"/>
</dbReference>
<dbReference type="InterPro" id="IPR024936">
    <property type="entry name" value="Cyclophilin-type_PPIase"/>
</dbReference>
<dbReference type="InterPro" id="IPR020892">
    <property type="entry name" value="Cyclophilin-type_PPIase_CS"/>
</dbReference>
<dbReference type="InterPro" id="IPR002130">
    <property type="entry name" value="Cyclophilin-type_PPIase_dom"/>
</dbReference>
<dbReference type="PANTHER" id="PTHR11071">
    <property type="entry name" value="PEPTIDYL-PROLYL CIS-TRANS ISOMERASE"/>
    <property type="match status" value="1"/>
</dbReference>
<dbReference type="PANTHER" id="PTHR11071:SF561">
    <property type="entry name" value="PEPTIDYL-PROLYL CIS-TRANS ISOMERASE D-RELATED"/>
    <property type="match status" value="1"/>
</dbReference>
<dbReference type="Pfam" id="PF00160">
    <property type="entry name" value="Pro_isomerase"/>
    <property type="match status" value="1"/>
</dbReference>
<dbReference type="PIRSF" id="PIRSF001467">
    <property type="entry name" value="Peptidylpro_ismrse"/>
    <property type="match status" value="1"/>
</dbReference>
<dbReference type="PRINTS" id="PR00153">
    <property type="entry name" value="CSAPPISMRASE"/>
</dbReference>
<dbReference type="SUPFAM" id="SSF50891">
    <property type="entry name" value="Cyclophilin-like"/>
    <property type="match status" value="1"/>
</dbReference>
<dbReference type="PROSITE" id="PS00170">
    <property type="entry name" value="CSA_PPIASE_1"/>
    <property type="match status" value="1"/>
</dbReference>
<dbReference type="PROSITE" id="PS50072">
    <property type="entry name" value="CSA_PPIASE_2"/>
    <property type="match status" value="1"/>
</dbReference>
<proteinExistence type="evidence at protein level"/>
<accession>Q54SM3</accession>
<comment type="function">
    <text evidence="1">PPIase that catalyzes the cis-trans isomerization of proline imidic peptide bonds in oligopeptides and may therefore assist protein folding.</text>
</comment>
<comment type="catalytic activity">
    <reaction evidence="1">
        <text>[protein]-peptidylproline (omega=180) = [protein]-peptidylproline (omega=0)</text>
        <dbReference type="Rhea" id="RHEA:16237"/>
        <dbReference type="Rhea" id="RHEA-COMP:10747"/>
        <dbReference type="Rhea" id="RHEA-COMP:10748"/>
        <dbReference type="ChEBI" id="CHEBI:83833"/>
        <dbReference type="ChEBI" id="CHEBI:83834"/>
        <dbReference type="EC" id="5.2.1.8"/>
    </reaction>
</comment>
<comment type="activity regulation">
    <text evidence="1">Binds cyclosporin A (CsA). CsA mediates some of its effects via an inhibitory action on PPIase.</text>
</comment>
<comment type="subcellular location">
    <subcellularLocation>
        <location evidence="3">Cytoplasm</location>
        <location evidence="3">Cytosol</location>
    </subcellularLocation>
</comment>
<comment type="developmental stage">
    <text evidence="3 4 5">Not developmentally regulated.</text>
</comment>
<comment type="disruption phenotype">
    <text evidence="6">Grows and develops almost normally, except for the production of tall fruiting bodies.</text>
</comment>
<comment type="similarity">
    <text evidence="8">Belongs to the cyclophilin-type PPIase family.</text>
</comment>
<reference key="1">
    <citation type="journal article" date="2005" name="Nature">
        <title>The genome of the social amoeba Dictyostelium discoideum.</title>
        <authorList>
            <person name="Eichinger L."/>
            <person name="Pachebat J.A."/>
            <person name="Gloeckner G."/>
            <person name="Rajandream M.A."/>
            <person name="Sucgang R."/>
            <person name="Berriman M."/>
            <person name="Song J."/>
            <person name="Olsen R."/>
            <person name="Szafranski K."/>
            <person name="Xu Q."/>
            <person name="Tunggal B."/>
            <person name="Kummerfeld S."/>
            <person name="Madera M."/>
            <person name="Konfortov B.A."/>
            <person name="Rivero F."/>
            <person name="Bankier A.T."/>
            <person name="Lehmann R."/>
            <person name="Hamlin N."/>
            <person name="Davies R."/>
            <person name="Gaudet P."/>
            <person name="Fey P."/>
            <person name="Pilcher K."/>
            <person name="Chen G."/>
            <person name="Saunders D."/>
            <person name="Sodergren E.J."/>
            <person name="Davis P."/>
            <person name="Kerhornou A."/>
            <person name="Nie X."/>
            <person name="Hall N."/>
            <person name="Anjard C."/>
            <person name="Hemphill L."/>
            <person name="Bason N."/>
            <person name="Farbrother P."/>
            <person name="Desany B."/>
            <person name="Just E."/>
            <person name="Morio T."/>
            <person name="Rost R."/>
            <person name="Churcher C.M."/>
            <person name="Cooper J."/>
            <person name="Haydock S."/>
            <person name="van Driessche N."/>
            <person name="Cronin A."/>
            <person name="Goodhead I."/>
            <person name="Muzny D.M."/>
            <person name="Mourier T."/>
            <person name="Pain A."/>
            <person name="Lu M."/>
            <person name="Harper D."/>
            <person name="Lindsay R."/>
            <person name="Hauser H."/>
            <person name="James K.D."/>
            <person name="Quiles M."/>
            <person name="Madan Babu M."/>
            <person name="Saito T."/>
            <person name="Buchrieser C."/>
            <person name="Wardroper A."/>
            <person name="Felder M."/>
            <person name="Thangavelu M."/>
            <person name="Johnson D."/>
            <person name="Knights A."/>
            <person name="Loulseged H."/>
            <person name="Mungall K.L."/>
            <person name="Oliver K."/>
            <person name="Price C."/>
            <person name="Quail M.A."/>
            <person name="Urushihara H."/>
            <person name="Hernandez J."/>
            <person name="Rabbinowitsch E."/>
            <person name="Steffen D."/>
            <person name="Sanders M."/>
            <person name="Ma J."/>
            <person name="Kohara Y."/>
            <person name="Sharp S."/>
            <person name="Simmonds M.N."/>
            <person name="Spiegler S."/>
            <person name="Tivey A."/>
            <person name="Sugano S."/>
            <person name="White B."/>
            <person name="Walker D."/>
            <person name="Woodward J.R."/>
            <person name="Winckler T."/>
            <person name="Tanaka Y."/>
            <person name="Shaulsky G."/>
            <person name="Schleicher M."/>
            <person name="Weinstock G.M."/>
            <person name="Rosenthal A."/>
            <person name="Cox E.C."/>
            <person name="Chisholm R.L."/>
            <person name="Gibbs R.A."/>
            <person name="Loomis W.F."/>
            <person name="Platzer M."/>
            <person name="Kay R.R."/>
            <person name="Williams J.G."/>
            <person name="Dear P.H."/>
            <person name="Noegel A.A."/>
            <person name="Barrell B.G."/>
            <person name="Kuspa A."/>
        </authorList>
    </citation>
    <scope>NUCLEOTIDE SEQUENCE [LARGE SCALE GENOMIC DNA]</scope>
    <source>
        <strain>AX4</strain>
    </source>
</reference>
<reference key="2">
    <citation type="journal article" date="1999" name="Biochimie">
        <title>The multigene immunophilin family of Dictyostelium discoideum. Characterization of microsomal and mitochondrial cyclophilin isoforms.</title>
        <authorList>
            <person name="Tapparo A."/>
            <person name="Kieffer S."/>
            <person name="Cretin F."/>
            <person name="Satre M."/>
            <person name="Klein G."/>
        </authorList>
    </citation>
    <scope>PROTEIN SEQUENCE OF 2-10</scope>
    <scope>SUBCELLULAR LOCATION</scope>
    <scope>CLEAVAGE OF INITIATOR METHIONINE</scope>
    <scope>DEVELOPMENTAL STAGE</scope>
    <source>
        <strain>AX2</strain>
    </source>
</reference>
<reference key="3">
    <citation type="submission" date="2010-01" db="UniProtKB">
        <authorList>
            <person name="Bienvenut W.V."/>
            <person name="Veltman D.M."/>
            <person name="Insall R.H."/>
        </authorList>
    </citation>
    <scope>PROTEIN SEQUENCE OF 2-13</scope>
    <scope>CLEAVAGE OF INITIATOR METHIONINE</scope>
    <scope>IDENTIFICATION BY MASS SPECTROMETRY</scope>
</reference>
<reference key="4">
    <citation type="journal article" date="1991" name="Dev. Genet.">
        <title>cDNA sequence of cyclophilin from Dictyostelium discoideum.</title>
        <authorList>
            <person name="Barisic K."/>
            <person name="Mollner S."/>
            <person name="Noegel A.A."/>
            <person name="Gerisch G."/>
            <person name="Segall J.E."/>
        </authorList>
    </citation>
    <scope>IDENTIFICATION</scope>
    <scope>DEVELOPMENTAL STAGE</scope>
</reference>
<reference key="5">
    <citation type="journal article" date="1996" name="Proc. Natl. Acad. Sci. U.S.A.">
        <title>Mutagenesis and gene identification in Dictyostelium by shotgun antisense.</title>
        <authorList>
            <person name="Spann T.P."/>
            <person name="Brock D.A."/>
            <person name="Lindsey D.F."/>
            <person name="Wood S.A."/>
            <person name="Gomer R.H."/>
        </authorList>
    </citation>
    <scope>DISRUPTION PHENOTYPE</scope>
</reference>
<reference key="6">
    <citation type="journal article" date="2004" name="Eukaryot. Cell">
        <title>Control of cell type proportioning in Dictyostelium discoideum by differentiation-inducing factor as determined by in situ hybridization.</title>
        <authorList>
            <person name="Maruo T."/>
            <person name="Sakamoto H."/>
            <person name="Iranfar N."/>
            <person name="Fuller D."/>
            <person name="Morio T."/>
            <person name="Urushihara H."/>
            <person name="Tanaka Y."/>
            <person name="Maeda M."/>
            <person name="Loomis W.F."/>
        </authorList>
    </citation>
    <scope>DEVELOPMENTAL STAGE [LARGE SCALE ANALYSIS]</scope>
</reference>
<gene>
    <name type="primary">ppiA</name>
    <name type="synonym">cyp1</name>
    <name type="ORF">DDB_G0282359</name>
</gene>
<name>PPIA_DICDI</name>